<name>NCB5R_CANAL</name>
<dbReference type="EC" id="1.6.2.2" evidence="2"/>
<dbReference type="EMBL" id="CP017626">
    <property type="protein sequence ID" value="AOW29283.1"/>
    <property type="molecule type" value="Genomic_DNA"/>
</dbReference>
<dbReference type="RefSeq" id="XP_711449.1">
    <property type="nucleotide sequence ID" value="XM_706357.1"/>
</dbReference>
<dbReference type="SMR" id="Q59P03"/>
<dbReference type="BioGRID" id="1230038">
    <property type="interactions" value="1"/>
</dbReference>
<dbReference type="FunCoup" id="Q59P03">
    <property type="interactions" value="287"/>
</dbReference>
<dbReference type="STRING" id="237561.Q59P03"/>
<dbReference type="EnsemblFungi" id="C4_05450C_A-T">
    <property type="protein sequence ID" value="C4_05450C_A-T-p1"/>
    <property type="gene ID" value="C4_05450C_A"/>
</dbReference>
<dbReference type="GeneID" id="3646961"/>
<dbReference type="KEGG" id="cal:CAALFM_C405450CA"/>
<dbReference type="CGD" id="CAL0000182794">
    <property type="gene designation" value="CBR1"/>
</dbReference>
<dbReference type="VEuPathDB" id="FungiDB:C4_05450C_A"/>
<dbReference type="eggNOG" id="KOG0534">
    <property type="taxonomic scope" value="Eukaryota"/>
</dbReference>
<dbReference type="HOGENOM" id="CLU_003827_9_0_1"/>
<dbReference type="InParanoid" id="Q59P03"/>
<dbReference type="OMA" id="VQIFMCG"/>
<dbReference type="OrthoDB" id="432685at2759"/>
<dbReference type="UniPathway" id="UPA00559"/>
<dbReference type="PRO" id="PR:Q59P03"/>
<dbReference type="Proteomes" id="UP000000559">
    <property type="component" value="Chromosome 4"/>
</dbReference>
<dbReference type="GO" id="GO:0005741">
    <property type="term" value="C:mitochondrial outer membrane"/>
    <property type="evidence" value="ECO:0007669"/>
    <property type="project" value="UniProtKB-SubCell"/>
</dbReference>
<dbReference type="GO" id="GO:0005886">
    <property type="term" value="C:plasma membrane"/>
    <property type="evidence" value="ECO:0000314"/>
    <property type="project" value="CGD"/>
</dbReference>
<dbReference type="GO" id="GO:0090560">
    <property type="term" value="F:2-(3-amino-3-carboxypropyl)histidine synthase activity"/>
    <property type="evidence" value="ECO:0007669"/>
    <property type="project" value="EnsemblFungi"/>
</dbReference>
<dbReference type="GO" id="GO:0004128">
    <property type="term" value="F:cytochrome-b5 reductase activity, acting on NAD(P)H"/>
    <property type="evidence" value="ECO:0000250"/>
    <property type="project" value="UniProtKB"/>
</dbReference>
<dbReference type="GO" id="GO:0003954">
    <property type="term" value="F:NADH dehydrogenase activity"/>
    <property type="evidence" value="ECO:0000250"/>
    <property type="project" value="UniProtKB"/>
</dbReference>
<dbReference type="GO" id="GO:0017183">
    <property type="term" value="P:protein histidyl modification to diphthamide"/>
    <property type="evidence" value="ECO:0000250"/>
    <property type="project" value="UniProtKB"/>
</dbReference>
<dbReference type="GO" id="GO:0002926">
    <property type="term" value="P:tRNA wobble base 5-methoxycarbonylmethyl-2-thiouridinylation"/>
    <property type="evidence" value="ECO:0000250"/>
    <property type="project" value="UniProtKB"/>
</dbReference>
<dbReference type="CDD" id="cd06183">
    <property type="entry name" value="cyt_b5_reduct_like"/>
    <property type="match status" value="1"/>
</dbReference>
<dbReference type="FunFam" id="2.40.30.10:FF:000032">
    <property type="entry name" value="NADH-cytochrome b5 reductase"/>
    <property type="match status" value="1"/>
</dbReference>
<dbReference type="FunFam" id="3.40.50.80:FF:000019">
    <property type="entry name" value="NADH-cytochrome b5 reductase"/>
    <property type="match status" value="1"/>
</dbReference>
<dbReference type="Gene3D" id="3.40.50.80">
    <property type="entry name" value="Nucleotide-binding domain of ferredoxin-NADP reductase (FNR) module"/>
    <property type="match status" value="1"/>
</dbReference>
<dbReference type="Gene3D" id="2.40.30.10">
    <property type="entry name" value="Translation factors"/>
    <property type="match status" value="1"/>
</dbReference>
<dbReference type="InterPro" id="IPR001834">
    <property type="entry name" value="CBR-like"/>
</dbReference>
<dbReference type="InterPro" id="IPR008333">
    <property type="entry name" value="Cbr1-like_FAD-bd_dom"/>
</dbReference>
<dbReference type="InterPro" id="IPR017927">
    <property type="entry name" value="FAD-bd_FR_type"/>
</dbReference>
<dbReference type="InterPro" id="IPR001709">
    <property type="entry name" value="Flavoprot_Pyr_Nucl_cyt_Rdtase"/>
</dbReference>
<dbReference type="InterPro" id="IPR039261">
    <property type="entry name" value="FNR_nucleotide-bd"/>
</dbReference>
<dbReference type="InterPro" id="IPR001433">
    <property type="entry name" value="OxRdtase_FAD/NAD-bd"/>
</dbReference>
<dbReference type="InterPro" id="IPR017938">
    <property type="entry name" value="Riboflavin_synthase-like_b-brl"/>
</dbReference>
<dbReference type="PANTHER" id="PTHR19370">
    <property type="entry name" value="NADH-CYTOCHROME B5 REDUCTASE"/>
    <property type="match status" value="1"/>
</dbReference>
<dbReference type="PANTHER" id="PTHR19370:SF184">
    <property type="entry name" value="NADH-CYTOCHROME B5 REDUCTASE-LIKE"/>
    <property type="match status" value="1"/>
</dbReference>
<dbReference type="Pfam" id="PF00970">
    <property type="entry name" value="FAD_binding_6"/>
    <property type="match status" value="1"/>
</dbReference>
<dbReference type="Pfam" id="PF00175">
    <property type="entry name" value="NAD_binding_1"/>
    <property type="match status" value="1"/>
</dbReference>
<dbReference type="PRINTS" id="PR00406">
    <property type="entry name" value="CYTB5RDTASE"/>
</dbReference>
<dbReference type="PRINTS" id="PR00371">
    <property type="entry name" value="FPNCR"/>
</dbReference>
<dbReference type="SUPFAM" id="SSF52343">
    <property type="entry name" value="Ferredoxin reductase-like, C-terminal NADP-linked domain"/>
    <property type="match status" value="1"/>
</dbReference>
<dbReference type="SUPFAM" id="SSF63380">
    <property type="entry name" value="Riboflavin synthase domain-like"/>
    <property type="match status" value="1"/>
</dbReference>
<dbReference type="PROSITE" id="PS51384">
    <property type="entry name" value="FAD_FR"/>
    <property type="match status" value="1"/>
</dbReference>
<accession>Q59P03</accession>
<accession>A0A1D8PMC6</accession>
<comment type="function">
    <text evidence="2">NADH-dependent reductase for DPH3 and cytochrome b5. Required for the first step of diphthamide biosynthesis, a post-translational modification of histidine which occurs in elongation factor 2. DPH1 and DPH2 transfer a 3-amino-3-carboxypropyl (ACP) group from S-adenosyl-L-methionine (SAM) to a histidine residue, the reaction is assisted by a reduction system comprising DPH3 and a NADH-dependent reductase, predominantly CBR1. By reducing DPH3, also involved in the formation of the tRNA wobble base modification mcm5s 2U (5-methoxycarbonylmethyl-2-thiouridine), mediated by the elongator complex. The cytochrome b5/NADH cytochrome b5 reductase electron transfer system supports the catalytic activity of several sterol biosynthetic enzymes.</text>
</comment>
<comment type="catalytic activity">
    <reaction evidence="2">
        <text>2 Fe(III)-[cytochrome b5] + NADH = 2 Fe(II)-[cytochrome b5] + NAD(+) + H(+)</text>
        <dbReference type="Rhea" id="RHEA:46680"/>
        <dbReference type="Rhea" id="RHEA-COMP:10438"/>
        <dbReference type="Rhea" id="RHEA-COMP:10439"/>
        <dbReference type="ChEBI" id="CHEBI:15378"/>
        <dbReference type="ChEBI" id="CHEBI:29033"/>
        <dbReference type="ChEBI" id="CHEBI:29034"/>
        <dbReference type="ChEBI" id="CHEBI:57540"/>
        <dbReference type="ChEBI" id="CHEBI:57945"/>
        <dbReference type="EC" id="1.6.2.2"/>
    </reaction>
</comment>
<comment type="catalytic activity">
    <reaction evidence="2">
        <text>2 Fe(3+)-[Dph3] + NADH = 2 Fe(2+)-[Dph3] + NAD(+) + H(+)</text>
        <dbReference type="Rhea" id="RHEA:71231"/>
        <dbReference type="Rhea" id="RHEA-COMP:18002"/>
        <dbReference type="Rhea" id="RHEA-COMP:18003"/>
        <dbReference type="ChEBI" id="CHEBI:15378"/>
        <dbReference type="ChEBI" id="CHEBI:29033"/>
        <dbReference type="ChEBI" id="CHEBI:29034"/>
        <dbReference type="ChEBI" id="CHEBI:57540"/>
        <dbReference type="ChEBI" id="CHEBI:57945"/>
        <dbReference type="ChEBI" id="CHEBI:83228"/>
    </reaction>
    <physiologicalReaction direction="left-to-right" evidence="2">
        <dbReference type="Rhea" id="RHEA:71232"/>
    </physiologicalReaction>
</comment>
<comment type="cofactor">
    <cofactor evidence="3">
        <name>FAD</name>
        <dbReference type="ChEBI" id="CHEBI:57692"/>
    </cofactor>
</comment>
<comment type="pathway">
    <text evidence="2">Protein modification; peptidyl-diphthamide biosynthesis.</text>
</comment>
<comment type="subunit">
    <text evidence="2">Monomer. Component of the 2-(3-amino-3-carboxypropyl)histidine synthase complex composed of DPH1, DPH2, DPH3 and a NADH-dependent reductase, predominantly CBR1.</text>
</comment>
<comment type="subcellular location">
    <subcellularLocation>
        <location evidence="2">Mitochondrion outer membrane</location>
        <topology evidence="3">Single-pass membrane protein</topology>
    </subcellularLocation>
</comment>
<comment type="similarity">
    <text evidence="5">Belongs to the flavoprotein pyridine nucleotide cytochrome reductase family.</text>
</comment>
<keyword id="KW-0274">FAD</keyword>
<keyword id="KW-0285">Flavoprotein</keyword>
<keyword id="KW-0472">Membrane</keyword>
<keyword id="KW-0496">Mitochondrion</keyword>
<keyword id="KW-1000">Mitochondrion outer membrane</keyword>
<keyword id="KW-0520">NAD</keyword>
<keyword id="KW-0560">Oxidoreductase</keyword>
<keyword id="KW-1185">Reference proteome</keyword>
<keyword id="KW-0808">Transferase</keyword>
<keyword id="KW-0812">Transmembrane</keyword>
<keyword id="KW-1133">Transmembrane helix</keyword>
<sequence length="294" mass="32472">MSETTTVPPIETVSEPNPFIVFATVATIISAFIGYYFLQQSKKHTPVLKPDEFQKFPLIEKIRVSHNSAIYRFGLPKSTDRLGLPIGQHISIGATIDGKEVVRSYTPISTDDQLGHFDLLIKTYENGNISRHVAGKNVGEHIEIRGPKGFFTYTPNMVKSFGMIAGGTGIAPMYQIITAILKNPEDKTKIHLVYANVTESDILLKEELDNFAARHPDRLKIHYVLNEAPANWQGSVGFVTPEIIDTHLPKASNDTNLLLCGPPPMVSAMKKAAVELGFQKAKPVSKLGDQVFVF</sequence>
<reference key="1">
    <citation type="journal article" date="2004" name="Proc. Natl. Acad. Sci. U.S.A.">
        <title>The diploid genome sequence of Candida albicans.</title>
        <authorList>
            <person name="Jones T."/>
            <person name="Federspiel N.A."/>
            <person name="Chibana H."/>
            <person name="Dungan J."/>
            <person name="Kalman S."/>
            <person name="Magee B.B."/>
            <person name="Newport G."/>
            <person name="Thorstenson Y.R."/>
            <person name="Agabian N."/>
            <person name="Magee P.T."/>
            <person name="Davis R.W."/>
            <person name="Scherer S."/>
        </authorList>
    </citation>
    <scope>NUCLEOTIDE SEQUENCE [LARGE SCALE GENOMIC DNA]</scope>
    <source>
        <strain>SC5314 / ATCC MYA-2876</strain>
    </source>
</reference>
<reference key="2">
    <citation type="journal article" date="2007" name="Genome Biol.">
        <title>Assembly of the Candida albicans genome into sixteen supercontigs aligned on the eight chromosomes.</title>
        <authorList>
            <person name="van het Hoog M."/>
            <person name="Rast T.J."/>
            <person name="Martchenko M."/>
            <person name="Grindle S."/>
            <person name="Dignard D."/>
            <person name="Hogues H."/>
            <person name="Cuomo C."/>
            <person name="Berriman M."/>
            <person name="Scherer S."/>
            <person name="Magee B.B."/>
            <person name="Whiteway M."/>
            <person name="Chibana H."/>
            <person name="Nantel A."/>
            <person name="Magee P.T."/>
        </authorList>
    </citation>
    <scope>GENOME REANNOTATION</scope>
    <source>
        <strain>SC5314 / ATCC MYA-2876</strain>
    </source>
</reference>
<reference key="3">
    <citation type="journal article" date="2013" name="Genome Biol.">
        <title>Assembly of a phased diploid Candida albicans genome facilitates allele-specific measurements and provides a simple model for repeat and indel structure.</title>
        <authorList>
            <person name="Muzzey D."/>
            <person name="Schwartz K."/>
            <person name="Weissman J.S."/>
            <person name="Sherlock G."/>
        </authorList>
    </citation>
    <scope>NUCLEOTIDE SEQUENCE [LARGE SCALE GENOMIC DNA]</scope>
    <scope>GENOME REANNOTATION</scope>
    <source>
        <strain>SC5314 / ATCC MYA-2876</strain>
    </source>
</reference>
<proteinExistence type="inferred from homology"/>
<protein>
    <recommendedName>
        <fullName>NADH-cytochrome b5 reductase 1</fullName>
        <ecNumber evidence="2">1.6.2.2</ecNumber>
    </recommendedName>
    <alternativeName>
        <fullName>Microsomal cytochrome b reductase</fullName>
    </alternativeName>
</protein>
<evidence type="ECO:0000250" key="1"/>
<evidence type="ECO:0000250" key="2">
    <source>
        <dbReference type="UniProtKB" id="P38626"/>
    </source>
</evidence>
<evidence type="ECO:0000255" key="3"/>
<evidence type="ECO:0000255" key="4">
    <source>
        <dbReference type="PROSITE-ProRule" id="PRU00716"/>
    </source>
</evidence>
<evidence type="ECO:0000305" key="5"/>
<gene>
    <name type="primary">CBR1</name>
    <name type="ordered locus">CAALFM_C405450CA</name>
    <name type="ORF">CaO19.1801</name>
    <name type="ORF">CaO19.9367</name>
</gene>
<organism>
    <name type="scientific">Candida albicans (strain SC5314 / ATCC MYA-2876)</name>
    <name type="common">Yeast</name>
    <dbReference type="NCBI Taxonomy" id="237561"/>
    <lineage>
        <taxon>Eukaryota</taxon>
        <taxon>Fungi</taxon>
        <taxon>Dikarya</taxon>
        <taxon>Ascomycota</taxon>
        <taxon>Saccharomycotina</taxon>
        <taxon>Pichiomycetes</taxon>
        <taxon>Debaryomycetaceae</taxon>
        <taxon>Candida/Lodderomyces clade</taxon>
        <taxon>Candida</taxon>
    </lineage>
</organism>
<feature type="chain" id="PRO_0000330148" description="NADH-cytochrome b5 reductase 1">
    <location>
        <begin position="1"/>
        <end position="294"/>
    </location>
</feature>
<feature type="transmembrane region" description="Helical" evidence="3">
    <location>
        <begin position="18"/>
        <end position="38"/>
    </location>
</feature>
<feature type="domain" description="FAD-binding FR-type" evidence="4">
    <location>
        <begin position="51"/>
        <end position="154"/>
    </location>
</feature>
<feature type="binding site" evidence="1">
    <location>
        <begin position="134"/>
        <end position="149"/>
    </location>
    <ligand>
        <name>FAD</name>
        <dbReference type="ChEBI" id="CHEBI:57692"/>
    </ligand>
</feature>
<feature type="binding site" evidence="1">
    <location>
        <begin position="160"/>
        <end position="192"/>
    </location>
    <ligand>
        <name>FAD</name>
        <dbReference type="ChEBI" id="CHEBI:57692"/>
    </ligand>
</feature>